<accession>Q6A7K0</accession>
<dbReference type="EMBL" id="AE017283">
    <property type="protein sequence ID" value="AAT83265.1"/>
    <property type="molecule type" value="Genomic_DNA"/>
</dbReference>
<dbReference type="RefSeq" id="WP_002516897.1">
    <property type="nucleotide sequence ID" value="NZ_CP025935.1"/>
</dbReference>
<dbReference type="SMR" id="Q6A7K0"/>
<dbReference type="EnsemblBacteria" id="AAT83265">
    <property type="protein sequence ID" value="AAT83265"/>
    <property type="gene ID" value="PPA1518"/>
</dbReference>
<dbReference type="GeneID" id="92857501"/>
<dbReference type="KEGG" id="pac:PPA1518"/>
<dbReference type="eggNOG" id="COG0233">
    <property type="taxonomic scope" value="Bacteria"/>
</dbReference>
<dbReference type="HOGENOM" id="CLU_073981_2_0_11"/>
<dbReference type="Proteomes" id="UP000000603">
    <property type="component" value="Chromosome"/>
</dbReference>
<dbReference type="GO" id="GO:0005737">
    <property type="term" value="C:cytoplasm"/>
    <property type="evidence" value="ECO:0007669"/>
    <property type="project" value="UniProtKB-SubCell"/>
</dbReference>
<dbReference type="GO" id="GO:0043023">
    <property type="term" value="F:ribosomal large subunit binding"/>
    <property type="evidence" value="ECO:0007669"/>
    <property type="project" value="TreeGrafter"/>
</dbReference>
<dbReference type="GO" id="GO:0006415">
    <property type="term" value="P:translational termination"/>
    <property type="evidence" value="ECO:0007669"/>
    <property type="project" value="UniProtKB-UniRule"/>
</dbReference>
<dbReference type="CDD" id="cd00520">
    <property type="entry name" value="RRF"/>
    <property type="match status" value="1"/>
</dbReference>
<dbReference type="FunFam" id="1.10.132.20:FF:000001">
    <property type="entry name" value="Ribosome-recycling factor"/>
    <property type="match status" value="1"/>
</dbReference>
<dbReference type="FunFam" id="3.30.1360.40:FF:000001">
    <property type="entry name" value="Ribosome-recycling factor"/>
    <property type="match status" value="1"/>
</dbReference>
<dbReference type="Gene3D" id="3.30.1360.40">
    <property type="match status" value="1"/>
</dbReference>
<dbReference type="Gene3D" id="1.10.132.20">
    <property type="entry name" value="Ribosome-recycling factor"/>
    <property type="match status" value="1"/>
</dbReference>
<dbReference type="HAMAP" id="MF_00040">
    <property type="entry name" value="RRF"/>
    <property type="match status" value="1"/>
</dbReference>
<dbReference type="InterPro" id="IPR002661">
    <property type="entry name" value="Ribosome_recyc_fac"/>
</dbReference>
<dbReference type="InterPro" id="IPR023584">
    <property type="entry name" value="Ribosome_recyc_fac_dom"/>
</dbReference>
<dbReference type="InterPro" id="IPR036191">
    <property type="entry name" value="RRF_sf"/>
</dbReference>
<dbReference type="NCBIfam" id="TIGR00496">
    <property type="entry name" value="frr"/>
    <property type="match status" value="1"/>
</dbReference>
<dbReference type="PANTHER" id="PTHR20982:SF3">
    <property type="entry name" value="MITOCHONDRIAL RIBOSOME RECYCLING FACTOR PSEUDO 1"/>
    <property type="match status" value="1"/>
</dbReference>
<dbReference type="PANTHER" id="PTHR20982">
    <property type="entry name" value="RIBOSOME RECYCLING FACTOR"/>
    <property type="match status" value="1"/>
</dbReference>
<dbReference type="Pfam" id="PF01765">
    <property type="entry name" value="RRF"/>
    <property type="match status" value="1"/>
</dbReference>
<dbReference type="SUPFAM" id="SSF55194">
    <property type="entry name" value="Ribosome recycling factor, RRF"/>
    <property type="match status" value="1"/>
</dbReference>
<sequence>MSDIIKDAEKKMGSAVDHAREEFAAIRTGRANPAMFNKLMVEYYGTPTPLQQLASFQVPEARTVLIAPFDKSCVNDVEKAIRDSDLGVNPSNDGNVVRCVLPALTEERRKEYIKMAKTKAEEGRIAVRNVRRASNDVVKKQEKDKEISEDEMTRLEKELDQVTRKYVEQIDELLKSKESELLEI</sequence>
<name>RRF_CUTAK</name>
<keyword id="KW-0963">Cytoplasm</keyword>
<keyword id="KW-0648">Protein biosynthesis</keyword>
<gene>
    <name evidence="1" type="primary">frr</name>
    <name type="ordered locus">PPA1518</name>
</gene>
<proteinExistence type="inferred from homology"/>
<protein>
    <recommendedName>
        <fullName evidence="1">Ribosome-recycling factor</fullName>
        <shortName evidence="1">RRF</shortName>
    </recommendedName>
    <alternativeName>
        <fullName evidence="1">Ribosome-releasing factor</fullName>
    </alternativeName>
</protein>
<organism>
    <name type="scientific">Cutibacterium acnes (strain DSM 16379 / KPA171202)</name>
    <name type="common">Propionibacterium acnes</name>
    <dbReference type="NCBI Taxonomy" id="267747"/>
    <lineage>
        <taxon>Bacteria</taxon>
        <taxon>Bacillati</taxon>
        <taxon>Actinomycetota</taxon>
        <taxon>Actinomycetes</taxon>
        <taxon>Propionibacteriales</taxon>
        <taxon>Propionibacteriaceae</taxon>
        <taxon>Cutibacterium</taxon>
    </lineage>
</organism>
<comment type="function">
    <text evidence="1">Responsible for the release of ribosomes from messenger RNA at the termination of protein biosynthesis. May increase the efficiency of translation by recycling ribosomes from one round of translation to another.</text>
</comment>
<comment type="subcellular location">
    <subcellularLocation>
        <location evidence="1">Cytoplasm</location>
    </subcellularLocation>
</comment>
<comment type="similarity">
    <text evidence="1">Belongs to the RRF family.</text>
</comment>
<feature type="chain" id="PRO_0000167514" description="Ribosome-recycling factor">
    <location>
        <begin position="1"/>
        <end position="184"/>
    </location>
</feature>
<reference key="1">
    <citation type="journal article" date="2004" name="Science">
        <title>The complete genome sequence of Propionibacterium acnes, a commensal of human skin.</title>
        <authorList>
            <person name="Brueggemann H."/>
            <person name="Henne A."/>
            <person name="Hoster F."/>
            <person name="Liesegang H."/>
            <person name="Wiezer A."/>
            <person name="Strittmatter A."/>
            <person name="Hujer S."/>
            <person name="Duerre P."/>
            <person name="Gottschalk G."/>
        </authorList>
    </citation>
    <scope>NUCLEOTIDE SEQUENCE [LARGE SCALE GENOMIC DNA]</scope>
    <source>
        <strain>DSM 16379 / KPA171202</strain>
    </source>
</reference>
<evidence type="ECO:0000255" key="1">
    <source>
        <dbReference type="HAMAP-Rule" id="MF_00040"/>
    </source>
</evidence>